<gene>
    <name type="primary">Ubxn11</name>
    <name type="synonym">D4Bwg1540e</name>
    <name type="synonym">Soc</name>
    <name type="synonym">Ubxd5</name>
</gene>
<protein>
    <recommendedName>
        <fullName>UBX domain-containing protein 11</fullName>
    </recommendedName>
    <alternativeName>
        <fullName>Socius</fullName>
    </alternativeName>
    <alternativeName>
        <fullName>UBX domain-containing protein 5</fullName>
    </alternativeName>
</protein>
<keyword id="KW-0025">Alternative splicing</keyword>
<keyword id="KW-0175">Coiled coil</keyword>
<keyword id="KW-0963">Cytoplasm</keyword>
<keyword id="KW-0206">Cytoskeleton</keyword>
<keyword id="KW-0597">Phosphoprotein</keyword>
<keyword id="KW-1185">Reference proteome</keyword>
<organism>
    <name type="scientific">Mus musculus</name>
    <name type="common">Mouse</name>
    <dbReference type="NCBI Taxonomy" id="10090"/>
    <lineage>
        <taxon>Eukaryota</taxon>
        <taxon>Metazoa</taxon>
        <taxon>Chordata</taxon>
        <taxon>Craniata</taxon>
        <taxon>Vertebrata</taxon>
        <taxon>Euteleostomi</taxon>
        <taxon>Mammalia</taxon>
        <taxon>Eutheria</taxon>
        <taxon>Euarchontoglires</taxon>
        <taxon>Glires</taxon>
        <taxon>Rodentia</taxon>
        <taxon>Myomorpha</taxon>
        <taxon>Muroidea</taxon>
        <taxon>Muridae</taxon>
        <taxon>Murinae</taxon>
        <taxon>Mus</taxon>
        <taxon>Mus</taxon>
    </lineage>
</organism>
<evidence type="ECO:0000250" key="1"/>
<evidence type="ECO:0000255" key="2"/>
<evidence type="ECO:0000255" key="3">
    <source>
        <dbReference type="PROSITE-ProRule" id="PRU00215"/>
    </source>
</evidence>
<evidence type="ECO:0000255" key="4">
    <source>
        <dbReference type="PROSITE-ProRule" id="PRU00732"/>
    </source>
</evidence>
<evidence type="ECO:0000256" key="5">
    <source>
        <dbReference type="SAM" id="MobiDB-lite"/>
    </source>
</evidence>
<evidence type="ECO:0000303" key="6">
    <source>
    </source>
</evidence>
<evidence type="ECO:0000305" key="7"/>
<evidence type="ECO:0007744" key="8">
    <source>
    </source>
</evidence>
<proteinExistence type="evidence at protein level"/>
<reference key="1">
    <citation type="journal article" date="2005" name="Science">
        <title>The transcriptional landscape of the mammalian genome.</title>
        <authorList>
            <person name="Carninci P."/>
            <person name="Kasukawa T."/>
            <person name="Katayama S."/>
            <person name="Gough J."/>
            <person name="Frith M.C."/>
            <person name="Maeda N."/>
            <person name="Oyama R."/>
            <person name="Ravasi T."/>
            <person name="Lenhard B."/>
            <person name="Wells C."/>
            <person name="Kodzius R."/>
            <person name="Shimokawa K."/>
            <person name="Bajic V.B."/>
            <person name="Brenner S.E."/>
            <person name="Batalov S."/>
            <person name="Forrest A.R."/>
            <person name="Zavolan M."/>
            <person name="Davis M.J."/>
            <person name="Wilming L.G."/>
            <person name="Aidinis V."/>
            <person name="Allen J.E."/>
            <person name="Ambesi-Impiombato A."/>
            <person name="Apweiler R."/>
            <person name="Aturaliya R.N."/>
            <person name="Bailey T.L."/>
            <person name="Bansal M."/>
            <person name="Baxter L."/>
            <person name="Beisel K.W."/>
            <person name="Bersano T."/>
            <person name="Bono H."/>
            <person name="Chalk A.M."/>
            <person name="Chiu K.P."/>
            <person name="Choudhary V."/>
            <person name="Christoffels A."/>
            <person name="Clutterbuck D.R."/>
            <person name="Crowe M.L."/>
            <person name="Dalla E."/>
            <person name="Dalrymple B.P."/>
            <person name="de Bono B."/>
            <person name="Della Gatta G."/>
            <person name="di Bernardo D."/>
            <person name="Down T."/>
            <person name="Engstrom P."/>
            <person name="Fagiolini M."/>
            <person name="Faulkner G."/>
            <person name="Fletcher C.F."/>
            <person name="Fukushima T."/>
            <person name="Furuno M."/>
            <person name="Futaki S."/>
            <person name="Gariboldi M."/>
            <person name="Georgii-Hemming P."/>
            <person name="Gingeras T.R."/>
            <person name="Gojobori T."/>
            <person name="Green R.E."/>
            <person name="Gustincich S."/>
            <person name="Harbers M."/>
            <person name="Hayashi Y."/>
            <person name="Hensch T.K."/>
            <person name="Hirokawa N."/>
            <person name="Hill D."/>
            <person name="Huminiecki L."/>
            <person name="Iacono M."/>
            <person name="Ikeo K."/>
            <person name="Iwama A."/>
            <person name="Ishikawa T."/>
            <person name="Jakt M."/>
            <person name="Kanapin A."/>
            <person name="Katoh M."/>
            <person name="Kawasawa Y."/>
            <person name="Kelso J."/>
            <person name="Kitamura H."/>
            <person name="Kitano H."/>
            <person name="Kollias G."/>
            <person name="Krishnan S.P."/>
            <person name="Kruger A."/>
            <person name="Kummerfeld S.K."/>
            <person name="Kurochkin I.V."/>
            <person name="Lareau L.F."/>
            <person name="Lazarevic D."/>
            <person name="Lipovich L."/>
            <person name="Liu J."/>
            <person name="Liuni S."/>
            <person name="McWilliam S."/>
            <person name="Madan Babu M."/>
            <person name="Madera M."/>
            <person name="Marchionni L."/>
            <person name="Matsuda H."/>
            <person name="Matsuzawa S."/>
            <person name="Miki H."/>
            <person name="Mignone F."/>
            <person name="Miyake S."/>
            <person name="Morris K."/>
            <person name="Mottagui-Tabar S."/>
            <person name="Mulder N."/>
            <person name="Nakano N."/>
            <person name="Nakauchi H."/>
            <person name="Ng P."/>
            <person name="Nilsson R."/>
            <person name="Nishiguchi S."/>
            <person name="Nishikawa S."/>
            <person name="Nori F."/>
            <person name="Ohara O."/>
            <person name="Okazaki Y."/>
            <person name="Orlando V."/>
            <person name="Pang K.C."/>
            <person name="Pavan W.J."/>
            <person name="Pavesi G."/>
            <person name="Pesole G."/>
            <person name="Petrovsky N."/>
            <person name="Piazza S."/>
            <person name="Reed J."/>
            <person name="Reid J.F."/>
            <person name="Ring B.Z."/>
            <person name="Ringwald M."/>
            <person name="Rost B."/>
            <person name="Ruan Y."/>
            <person name="Salzberg S.L."/>
            <person name="Sandelin A."/>
            <person name="Schneider C."/>
            <person name="Schoenbach C."/>
            <person name="Sekiguchi K."/>
            <person name="Semple C.A."/>
            <person name="Seno S."/>
            <person name="Sessa L."/>
            <person name="Sheng Y."/>
            <person name="Shibata Y."/>
            <person name="Shimada H."/>
            <person name="Shimada K."/>
            <person name="Silva D."/>
            <person name="Sinclair B."/>
            <person name="Sperling S."/>
            <person name="Stupka E."/>
            <person name="Sugiura K."/>
            <person name="Sultana R."/>
            <person name="Takenaka Y."/>
            <person name="Taki K."/>
            <person name="Tammoja K."/>
            <person name="Tan S.L."/>
            <person name="Tang S."/>
            <person name="Taylor M.S."/>
            <person name="Tegner J."/>
            <person name="Teichmann S.A."/>
            <person name="Ueda H.R."/>
            <person name="van Nimwegen E."/>
            <person name="Verardo R."/>
            <person name="Wei C.L."/>
            <person name="Yagi K."/>
            <person name="Yamanishi H."/>
            <person name="Zabarovsky E."/>
            <person name="Zhu S."/>
            <person name="Zimmer A."/>
            <person name="Hide W."/>
            <person name="Bult C."/>
            <person name="Grimmond S.M."/>
            <person name="Teasdale R.D."/>
            <person name="Liu E.T."/>
            <person name="Brusic V."/>
            <person name="Quackenbush J."/>
            <person name="Wahlestedt C."/>
            <person name="Mattick J.S."/>
            <person name="Hume D.A."/>
            <person name="Kai C."/>
            <person name="Sasaki D."/>
            <person name="Tomaru Y."/>
            <person name="Fukuda S."/>
            <person name="Kanamori-Katayama M."/>
            <person name="Suzuki M."/>
            <person name="Aoki J."/>
            <person name="Arakawa T."/>
            <person name="Iida J."/>
            <person name="Imamura K."/>
            <person name="Itoh M."/>
            <person name="Kato T."/>
            <person name="Kawaji H."/>
            <person name="Kawagashira N."/>
            <person name="Kawashima T."/>
            <person name="Kojima M."/>
            <person name="Kondo S."/>
            <person name="Konno H."/>
            <person name="Nakano K."/>
            <person name="Ninomiya N."/>
            <person name="Nishio T."/>
            <person name="Okada M."/>
            <person name="Plessy C."/>
            <person name="Shibata K."/>
            <person name="Shiraki T."/>
            <person name="Suzuki S."/>
            <person name="Tagami M."/>
            <person name="Waki K."/>
            <person name="Watahiki A."/>
            <person name="Okamura-Oho Y."/>
            <person name="Suzuki H."/>
            <person name="Kawai J."/>
            <person name="Hayashizaki Y."/>
        </authorList>
    </citation>
    <scope>NUCLEOTIDE SEQUENCE [LARGE SCALE MRNA] (ISOFORM 1)</scope>
    <source>
        <strain>C57BL/6J</strain>
        <tissue>Embryonic stem cell</tissue>
        <tissue>Head</tissue>
        <tissue>Testis</tissue>
    </source>
</reference>
<reference key="2">
    <citation type="journal article" date="2009" name="PLoS Biol.">
        <title>Lineage-specific biology revealed by a finished genome assembly of the mouse.</title>
        <authorList>
            <person name="Church D.M."/>
            <person name="Goodstadt L."/>
            <person name="Hillier L.W."/>
            <person name="Zody M.C."/>
            <person name="Goldstein S."/>
            <person name="She X."/>
            <person name="Bult C.J."/>
            <person name="Agarwala R."/>
            <person name="Cherry J.L."/>
            <person name="DiCuccio M."/>
            <person name="Hlavina W."/>
            <person name="Kapustin Y."/>
            <person name="Meric P."/>
            <person name="Maglott D."/>
            <person name="Birtle Z."/>
            <person name="Marques A.C."/>
            <person name="Graves T."/>
            <person name="Zhou S."/>
            <person name="Teague B."/>
            <person name="Potamousis K."/>
            <person name="Churas C."/>
            <person name="Place M."/>
            <person name="Herschleb J."/>
            <person name="Runnheim R."/>
            <person name="Forrest D."/>
            <person name="Amos-Landgraf J."/>
            <person name="Schwartz D.C."/>
            <person name="Cheng Z."/>
            <person name="Lindblad-Toh K."/>
            <person name="Eichler E.E."/>
            <person name="Ponting C.P."/>
        </authorList>
    </citation>
    <scope>NUCLEOTIDE SEQUENCE [LARGE SCALE GENOMIC DNA]</scope>
    <source>
        <strain>C57BL/6J</strain>
    </source>
</reference>
<reference key="3">
    <citation type="journal article" date="2004" name="Genome Res.">
        <title>The status, quality, and expansion of the NIH full-length cDNA project: the Mammalian Gene Collection (MGC).</title>
        <authorList>
            <consortium name="The MGC Project Team"/>
        </authorList>
    </citation>
    <scope>NUCLEOTIDE SEQUENCE [LARGE SCALE MRNA] (ISOFORM 2)</scope>
    <source>
        <strain>FVB/N</strain>
        <tissue>Colon</tissue>
    </source>
</reference>
<reference key="4">
    <citation type="journal article" date="2002" name="Mol. Cell. Biol.">
        <title>Socius is a novel Rnd GTPase-interacting protein involved in disassembly of actin stress fibers.</title>
        <authorList>
            <person name="Katoh H."/>
            <person name="Harada A."/>
            <person name="Mori K."/>
            <person name="Negishi M."/>
        </authorList>
    </citation>
    <scope>IDENTIFICATION</scope>
</reference>
<reference key="5">
    <citation type="journal article" date="2010" name="Cell">
        <title>A tissue-specific atlas of mouse protein phosphorylation and expression.</title>
        <authorList>
            <person name="Huttlin E.L."/>
            <person name="Jedrychowski M.P."/>
            <person name="Elias J.E."/>
            <person name="Goswami T."/>
            <person name="Rad R."/>
            <person name="Beausoleil S.A."/>
            <person name="Villen J."/>
            <person name="Haas W."/>
            <person name="Sowa M.E."/>
            <person name="Gygi S.P."/>
        </authorList>
    </citation>
    <scope>PHOSPHORYLATION [LARGE SCALE ANALYSIS] AT SER-478 AND SER-482</scope>
    <scope>IDENTIFICATION BY MASS SPECTROMETRY [LARGE SCALE ANALYSIS]</scope>
    <source>
        <tissue>Testis</tissue>
    </source>
</reference>
<name>UBX11_MOUSE</name>
<sequence>MSSPLASLSKTRKVPLESESVNPGRRGIRVYGNEDEVDMWNDGQDSEEKISLPSCYGGIGAPVSRQGPHDSELMASMTRKLQELEQQLQAQNDEMLSKERKILDLEDLVQTLQQHQNNAALQRQEELETQCIQLQRQIGEMERFLSDYGLQWVGEPMDQENSEEKTVSENDERDWMKAKKFWKPGDSFVPPEVDFDKLMASLQDLSELVEGEAQVTPVPGGARFRTLEPIPLKVYRNGIMMFDGPFRPFYDPSTQRCLRDILDGFFPSELQRLYPDGVPFKVSDLRNQIYPEDGLGQFPGEGRVVGRQKMRKVTDRVEETSGSRMTAEQFLNRLPKCIIRQGEVIDIRGPIRDTLQNCCPMPARIQEIIVETPALASERQRSQESPDMPMPLLSMLRIKSENGEQAFLLMMWPEDTIGDVRKLLAQARDMDSAAFEILSTFPPTVYQDDTVTLQAAGLVPNATLLLRTRRALLSNPISRPGSLP</sequence>
<comment type="function">
    <text evidence="1">May be involved in the reorganization of actin cytoskeleton mediated by RND1, RND2 and RND3. Promotes RHOA activation mediated by GNA12 and GNA13 (By similarity).</text>
</comment>
<comment type="subunit">
    <text evidence="1">Interacts with GNA12, GNA13, RND1, RND2 and RND3.</text>
</comment>
<comment type="subcellular location">
    <subcellularLocation>
        <location evidence="1">Cytoplasm</location>
        <location evidence="1">Cytoskeleton</location>
    </subcellularLocation>
</comment>
<comment type="alternative products">
    <event type="alternative splicing"/>
    <isoform>
        <id>Q9D572-1</id>
        <name>1</name>
        <sequence type="displayed"/>
    </isoform>
    <isoform>
        <id>Q9D572-2</id>
        <name>2</name>
        <sequence type="described" ref="VSP_024778 VSP_024779"/>
    </isoform>
</comment>
<comment type="sequence caution" evidence="7">
    <conflict type="frameshift">
        <sequence resource="EMBL-CDS" id="BAB26982"/>
    </conflict>
</comment>
<comment type="sequence caution" evidence="7">
    <conflict type="frameshift">
        <sequence resource="EMBL-CDS" id="BAC33351"/>
    </conflict>
</comment>
<feature type="chain" id="PRO_0000284922" description="UBX domain-containing protein 11">
    <location>
        <begin position="1"/>
        <end position="484"/>
    </location>
</feature>
<feature type="domain" description="SEP" evidence="4">
    <location>
        <begin position="227"/>
        <end position="291"/>
    </location>
</feature>
<feature type="domain" description="UBX" evidence="3">
    <location>
        <begin position="389"/>
        <end position="466"/>
    </location>
</feature>
<feature type="region of interest" description="Disordered" evidence="5">
    <location>
        <begin position="1"/>
        <end position="28"/>
    </location>
</feature>
<feature type="coiled-coil region" evidence="2">
    <location>
        <begin position="69"/>
        <end position="147"/>
    </location>
</feature>
<feature type="modified residue" description="Phosphoserine" evidence="8">
    <location>
        <position position="478"/>
    </location>
</feature>
<feature type="modified residue" description="Phosphoserine" evidence="8">
    <location>
        <position position="482"/>
    </location>
</feature>
<feature type="splice variant" id="VSP_024778" description="In isoform 2." evidence="6">
    <original>VSD</original>
    <variation>APG</variation>
    <location>
        <begin position="282"/>
        <end position="284"/>
    </location>
</feature>
<feature type="splice variant" id="VSP_024779" description="In isoform 2." evidence="6">
    <location>
        <begin position="285"/>
        <end position="484"/>
    </location>
</feature>
<feature type="sequence conflict" description="In Ref. 1; BAB26982." evidence="7" ref="1">
    <original>Q</original>
    <variation>R</variation>
    <location>
        <position position="151"/>
    </location>
</feature>
<accession>Q9D572</accession>
<accession>Q8C843</accession>
<accession>Q8VCP5</accession>
<accession>Q9CWP0</accession>
<dbReference type="EMBL" id="AK010492">
    <property type="protein sequence ID" value="BAB26982.1"/>
    <property type="status" value="ALT_FRAME"/>
    <property type="molecule type" value="mRNA"/>
</dbReference>
<dbReference type="EMBL" id="AK015720">
    <property type="protein sequence ID" value="BAB29947.1"/>
    <property type="molecule type" value="mRNA"/>
</dbReference>
<dbReference type="EMBL" id="AK048494">
    <property type="protein sequence ID" value="BAC33351.1"/>
    <property type="status" value="ALT_FRAME"/>
    <property type="molecule type" value="mRNA"/>
</dbReference>
<dbReference type="EMBL" id="AL670680">
    <property type="status" value="NOT_ANNOTATED_CDS"/>
    <property type="molecule type" value="Genomic_DNA"/>
</dbReference>
<dbReference type="EMBL" id="BC019461">
    <property type="protein sequence ID" value="AAH19461.1"/>
    <property type="molecule type" value="mRNA"/>
</dbReference>
<dbReference type="CCDS" id="CCDS18763.1">
    <molecule id="Q9D572-1"/>
</dbReference>
<dbReference type="RefSeq" id="NP_080533.1">
    <molecule id="Q9D572-1"/>
    <property type="nucleotide sequence ID" value="NM_026257.3"/>
</dbReference>
<dbReference type="SMR" id="Q9D572"/>
<dbReference type="FunCoup" id="Q9D572">
    <property type="interactions" value="32"/>
</dbReference>
<dbReference type="STRING" id="10090.ENSMUSP00000074255"/>
<dbReference type="iPTMnet" id="Q9D572"/>
<dbReference type="PhosphoSitePlus" id="Q9D572"/>
<dbReference type="SwissPalm" id="Q9D572"/>
<dbReference type="PaxDb" id="10090-ENSMUSP00000074255"/>
<dbReference type="ProteomicsDB" id="298377">
    <molecule id="Q9D572-1"/>
</dbReference>
<dbReference type="ProteomicsDB" id="298378">
    <molecule id="Q9D572-2"/>
</dbReference>
<dbReference type="Antibodypedia" id="30597">
    <property type="antibodies" value="73 antibodies from 23 providers"/>
</dbReference>
<dbReference type="DNASU" id="67586"/>
<dbReference type="Ensembl" id="ENSMUST00000074690.11">
    <molecule id="Q9D572-1"/>
    <property type="protein sequence ID" value="ENSMUSP00000074255.5"/>
    <property type="gene ID" value="ENSMUSG00000012126.17"/>
</dbReference>
<dbReference type="GeneID" id="67586"/>
<dbReference type="KEGG" id="mmu:67586"/>
<dbReference type="UCSC" id="uc008veb.2">
    <molecule id="Q9D572-1"/>
    <property type="organism name" value="mouse"/>
</dbReference>
<dbReference type="AGR" id="MGI:1914836"/>
<dbReference type="CTD" id="91544"/>
<dbReference type="MGI" id="MGI:1914836">
    <property type="gene designation" value="Ubxn11"/>
</dbReference>
<dbReference type="VEuPathDB" id="HostDB:ENSMUSG00000012126"/>
<dbReference type="eggNOG" id="KOG2086">
    <property type="taxonomic scope" value="Eukaryota"/>
</dbReference>
<dbReference type="GeneTree" id="ENSGT00520000055567"/>
<dbReference type="HOGENOM" id="CLU_044433_0_1_1"/>
<dbReference type="InParanoid" id="Q9D572"/>
<dbReference type="OMA" id="DFELMSA"/>
<dbReference type="OrthoDB" id="65840at9989"/>
<dbReference type="PhylomeDB" id="Q9D572"/>
<dbReference type="TreeFam" id="TF329799"/>
<dbReference type="Reactome" id="R-MMU-9696264">
    <property type="pathway name" value="RND3 GTPase cycle"/>
</dbReference>
<dbReference type="Reactome" id="R-MMU-9696270">
    <property type="pathway name" value="RND2 GTPase cycle"/>
</dbReference>
<dbReference type="Reactome" id="R-MMU-9696273">
    <property type="pathway name" value="RND1 GTPase cycle"/>
</dbReference>
<dbReference type="BioGRID-ORCS" id="67586">
    <property type="hits" value="2 hits in 79 CRISPR screens"/>
</dbReference>
<dbReference type="PRO" id="PR:Q9D572"/>
<dbReference type="Proteomes" id="UP000000589">
    <property type="component" value="Chromosome 4"/>
</dbReference>
<dbReference type="RNAct" id="Q9D572">
    <property type="molecule type" value="protein"/>
</dbReference>
<dbReference type="Bgee" id="ENSMUSG00000012126">
    <property type="expression patterns" value="Expressed in seminiferous tubule of testis and 113 other cell types or tissues"/>
</dbReference>
<dbReference type="ExpressionAtlas" id="Q9D572">
    <property type="expression patterns" value="baseline and differential"/>
</dbReference>
<dbReference type="GO" id="GO:0005737">
    <property type="term" value="C:cytoplasm"/>
    <property type="evidence" value="ECO:0007669"/>
    <property type="project" value="UniProtKB-KW"/>
</dbReference>
<dbReference type="GO" id="GO:0005856">
    <property type="term" value="C:cytoskeleton"/>
    <property type="evidence" value="ECO:0007669"/>
    <property type="project" value="UniProtKB-SubCell"/>
</dbReference>
<dbReference type="CDD" id="cd17077">
    <property type="entry name" value="UBX_UBXN11"/>
    <property type="match status" value="1"/>
</dbReference>
<dbReference type="FunFam" id="3.30.420.210:FF:000003">
    <property type="entry name" value="UBX domain protein 11"/>
    <property type="match status" value="1"/>
</dbReference>
<dbReference type="Gene3D" id="3.10.20.90">
    <property type="entry name" value="Phosphatidylinositol 3-kinase Catalytic Subunit, Chain A, domain 1"/>
    <property type="match status" value="1"/>
</dbReference>
<dbReference type="Gene3D" id="3.30.420.210">
    <property type="entry name" value="SEP domain"/>
    <property type="match status" value="1"/>
</dbReference>
<dbReference type="InterPro" id="IPR036241">
    <property type="entry name" value="NSFL1C_SEP_dom_sf"/>
</dbReference>
<dbReference type="InterPro" id="IPR012989">
    <property type="entry name" value="SEP_domain"/>
</dbReference>
<dbReference type="InterPro" id="IPR029071">
    <property type="entry name" value="Ubiquitin-like_domsf"/>
</dbReference>
<dbReference type="InterPro" id="IPR001012">
    <property type="entry name" value="UBX_dom"/>
</dbReference>
<dbReference type="PANTHER" id="PTHR23333">
    <property type="entry name" value="UBX DOMAIN CONTAINING PROTEIN"/>
    <property type="match status" value="1"/>
</dbReference>
<dbReference type="PANTHER" id="PTHR23333:SF4">
    <property type="entry name" value="UBX DOMAIN-CONTAINING PROTEIN 11"/>
    <property type="match status" value="1"/>
</dbReference>
<dbReference type="Pfam" id="PF08059">
    <property type="entry name" value="SEP"/>
    <property type="match status" value="1"/>
</dbReference>
<dbReference type="Pfam" id="PF00789">
    <property type="entry name" value="UBX"/>
    <property type="match status" value="1"/>
</dbReference>
<dbReference type="SUPFAM" id="SSF102848">
    <property type="entry name" value="NSFL1 (p97 ATPase) cofactor p47, SEP domain"/>
    <property type="match status" value="1"/>
</dbReference>
<dbReference type="SUPFAM" id="SSF54236">
    <property type="entry name" value="Ubiquitin-like"/>
    <property type="match status" value="1"/>
</dbReference>
<dbReference type="PROSITE" id="PS51399">
    <property type="entry name" value="SEP"/>
    <property type="match status" value="1"/>
</dbReference>
<dbReference type="PROSITE" id="PS50033">
    <property type="entry name" value="UBX"/>
    <property type="match status" value="1"/>
</dbReference>